<name>NUOK_ANADF</name>
<organism>
    <name type="scientific">Anaeromyxobacter sp. (strain Fw109-5)</name>
    <dbReference type="NCBI Taxonomy" id="404589"/>
    <lineage>
        <taxon>Bacteria</taxon>
        <taxon>Pseudomonadati</taxon>
        <taxon>Myxococcota</taxon>
        <taxon>Myxococcia</taxon>
        <taxon>Myxococcales</taxon>
        <taxon>Cystobacterineae</taxon>
        <taxon>Anaeromyxobacteraceae</taxon>
        <taxon>Anaeromyxobacter</taxon>
    </lineage>
</organism>
<gene>
    <name evidence="1" type="primary">nuoK</name>
    <name type="ordered locus">Anae109_4346</name>
</gene>
<feature type="chain" id="PRO_0000389927" description="NADH-quinone oxidoreductase subunit K">
    <location>
        <begin position="1"/>
        <end position="100"/>
    </location>
</feature>
<feature type="transmembrane region" description="Helical" evidence="1">
    <location>
        <begin position="4"/>
        <end position="24"/>
    </location>
</feature>
<feature type="transmembrane region" description="Helical" evidence="1">
    <location>
        <begin position="29"/>
        <end position="49"/>
    </location>
</feature>
<feature type="transmembrane region" description="Helical" evidence="1">
    <location>
        <begin position="61"/>
        <end position="81"/>
    </location>
</feature>
<comment type="function">
    <text evidence="1">NDH-1 shuttles electrons from NADH, via FMN and iron-sulfur (Fe-S) centers, to quinones in the respiratory chain. The immediate electron acceptor for the enzyme in this species is believed to be ubiquinone. Couples the redox reaction to proton translocation (for every two electrons transferred, four hydrogen ions are translocated across the cytoplasmic membrane), and thus conserves the redox energy in a proton gradient.</text>
</comment>
<comment type="catalytic activity">
    <reaction evidence="1">
        <text>a quinone + NADH + 5 H(+)(in) = a quinol + NAD(+) + 4 H(+)(out)</text>
        <dbReference type="Rhea" id="RHEA:57888"/>
        <dbReference type="ChEBI" id="CHEBI:15378"/>
        <dbReference type="ChEBI" id="CHEBI:24646"/>
        <dbReference type="ChEBI" id="CHEBI:57540"/>
        <dbReference type="ChEBI" id="CHEBI:57945"/>
        <dbReference type="ChEBI" id="CHEBI:132124"/>
    </reaction>
</comment>
<comment type="subunit">
    <text evidence="1">NDH-1 is composed of 14 different subunits. Subunits NuoA, H, J, K, L, M, N constitute the membrane sector of the complex.</text>
</comment>
<comment type="subcellular location">
    <subcellularLocation>
        <location evidence="1">Cell inner membrane</location>
        <topology evidence="1">Multi-pass membrane protein</topology>
    </subcellularLocation>
</comment>
<comment type="similarity">
    <text evidence="1">Belongs to the complex I subunit 4L family.</text>
</comment>
<proteinExistence type="inferred from homology"/>
<keyword id="KW-0997">Cell inner membrane</keyword>
<keyword id="KW-1003">Cell membrane</keyword>
<keyword id="KW-0472">Membrane</keyword>
<keyword id="KW-0520">NAD</keyword>
<keyword id="KW-0874">Quinone</keyword>
<keyword id="KW-1185">Reference proteome</keyword>
<keyword id="KW-1278">Translocase</keyword>
<keyword id="KW-0812">Transmembrane</keyword>
<keyword id="KW-1133">Transmembrane helix</keyword>
<keyword id="KW-0813">Transport</keyword>
<keyword id="KW-0830">Ubiquinone</keyword>
<reference key="1">
    <citation type="journal article" date="2015" name="Genome Announc.">
        <title>Complete genome sequence of Anaeromyxobacter sp. Fw109-5, an anaerobic, metal-reducing bacterium isolated from a contaminated subsurface environment.</title>
        <authorList>
            <person name="Hwang C."/>
            <person name="Copeland A."/>
            <person name="Lucas S."/>
            <person name="Lapidus A."/>
            <person name="Barry K."/>
            <person name="Glavina Del Rio T."/>
            <person name="Dalin E."/>
            <person name="Tice H."/>
            <person name="Pitluck S."/>
            <person name="Sims D."/>
            <person name="Brettin T."/>
            <person name="Bruce D.C."/>
            <person name="Detter J.C."/>
            <person name="Han C.S."/>
            <person name="Schmutz J."/>
            <person name="Larimer F.W."/>
            <person name="Land M.L."/>
            <person name="Hauser L.J."/>
            <person name="Kyrpides N."/>
            <person name="Lykidis A."/>
            <person name="Richardson P."/>
            <person name="Belieav A."/>
            <person name="Sanford R.A."/>
            <person name="Loeffler F.E."/>
            <person name="Fields M.W."/>
        </authorList>
    </citation>
    <scope>NUCLEOTIDE SEQUENCE [LARGE SCALE GENOMIC DNA]</scope>
    <source>
        <strain>Fw109-5</strain>
    </source>
</reference>
<sequence>MVPVTWYLWLAAMLFTIGLSGVLLKRNALIVMMSVELMLNAANLTFLAFARQTGDVGGHAIAFFVIAVAAAEAAVGLAVVIAIYRTRGTVNIDEVRALHE</sequence>
<evidence type="ECO:0000255" key="1">
    <source>
        <dbReference type="HAMAP-Rule" id="MF_01456"/>
    </source>
</evidence>
<protein>
    <recommendedName>
        <fullName evidence="1">NADH-quinone oxidoreductase subunit K</fullName>
        <ecNumber evidence="1">7.1.1.-</ecNumber>
    </recommendedName>
    <alternativeName>
        <fullName evidence="1">NADH dehydrogenase I subunit K</fullName>
    </alternativeName>
    <alternativeName>
        <fullName evidence="1">NDH-1 subunit K</fullName>
    </alternativeName>
</protein>
<accession>A7HIH8</accession>
<dbReference type="EC" id="7.1.1.-" evidence="1"/>
<dbReference type="EMBL" id="CP000769">
    <property type="protein sequence ID" value="ABS28524.1"/>
    <property type="molecule type" value="Genomic_DNA"/>
</dbReference>
<dbReference type="RefSeq" id="WP_012099169.1">
    <property type="nucleotide sequence ID" value="NC_009675.1"/>
</dbReference>
<dbReference type="SMR" id="A7HIH8"/>
<dbReference type="STRING" id="404589.Anae109_4346"/>
<dbReference type="KEGG" id="afw:Anae109_4346"/>
<dbReference type="eggNOG" id="COG0713">
    <property type="taxonomic scope" value="Bacteria"/>
</dbReference>
<dbReference type="HOGENOM" id="CLU_144724_0_0_7"/>
<dbReference type="OrthoDB" id="9810120at2"/>
<dbReference type="Proteomes" id="UP000006382">
    <property type="component" value="Chromosome"/>
</dbReference>
<dbReference type="GO" id="GO:0030964">
    <property type="term" value="C:NADH dehydrogenase complex"/>
    <property type="evidence" value="ECO:0007669"/>
    <property type="project" value="TreeGrafter"/>
</dbReference>
<dbReference type="GO" id="GO:0005886">
    <property type="term" value="C:plasma membrane"/>
    <property type="evidence" value="ECO:0007669"/>
    <property type="project" value="UniProtKB-SubCell"/>
</dbReference>
<dbReference type="GO" id="GO:0050136">
    <property type="term" value="F:NADH:ubiquinone reductase (non-electrogenic) activity"/>
    <property type="evidence" value="ECO:0007669"/>
    <property type="project" value="UniProtKB-UniRule"/>
</dbReference>
<dbReference type="GO" id="GO:0048038">
    <property type="term" value="F:quinone binding"/>
    <property type="evidence" value="ECO:0007669"/>
    <property type="project" value="UniProtKB-KW"/>
</dbReference>
<dbReference type="GO" id="GO:0042773">
    <property type="term" value="P:ATP synthesis coupled electron transport"/>
    <property type="evidence" value="ECO:0007669"/>
    <property type="project" value="InterPro"/>
</dbReference>
<dbReference type="FunFam" id="1.10.287.3510:FF:000001">
    <property type="entry name" value="NADH-quinone oxidoreductase subunit K"/>
    <property type="match status" value="1"/>
</dbReference>
<dbReference type="Gene3D" id="1.10.287.3510">
    <property type="match status" value="1"/>
</dbReference>
<dbReference type="HAMAP" id="MF_01456">
    <property type="entry name" value="NDH1_NuoK"/>
    <property type="match status" value="1"/>
</dbReference>
<dbReference type="InterPro" id="IPR001133">
    <property type="entry name" value="NADH_UbQ_OxRdtase_chain4L/K"/>
</dbReference>
<dbReference type="InterPro" id="IPR039428">
    <property type="entry name" value="NUOK/Mnh_C1-like"/>
</dbReference>
<dbReference type="NCBIfam" id="NF004320">
    <property type="entry name" value="PRK05715.1-2"/>
    <property type="match status" value="1"/>
</dbReference>
<dbReference type="NCBIfam" id="NF004321">
    <property type="entry name" value="PRK05715.1-3"/>
    <property type="match status" value="1"/>
</dbReference>
<dbReference type="NCBIfam" id="NF004323">
    <property type="entry name" value="PRK05715.1-5"/>
    <property type="match status" value="1"/>
</dbReference>
<dbReference type="PANTHER" id="PTHR11434:SF21">
    <property type="entry name" value="NADH DEHYDROGENASE SUBUNIT 4L-RELATED"/>
    <property type="match status" value="1"/>
</dbReference>
<dbReference type="PANTHER" id="PTHR11434">
    <property type="entry name" value="NADH-UBIQUINONE OXIDOREDUCTASE SUBUNIT ND4L"/>
    <property type="match status" value="1"/>
</dbReference>
<dbReference type="Pfam" id="PF00420">
    <property type="entry name" value="Oxidored_q2"/>
    <property type="match status" value="1"/>
</dbReference>